<accession>P0ADE1</accession>
<accession>P39412</accession>
<dbReference type="EMBL" id="AE005674">
    <property type="status" value="NOT_ANNOTATED_CDS"/>
    <property type="molecule type" value="Genomic_DNA"/>
</dbReference>
<dbReference type="EMBL" id="AE014073">
    <property type="protein sequence ID" value="AAP19621.1"/>
    <property type="molecule type" value="Genomic_DNA"/>
</dbReference>
<dbReference type="RefSeq" id="WP_001303782.1">
    <property type="nucleotide sequence ID" value="NZ_WPGW01000013.1"/>
</dbReference>
<dbReference type="GeneID" id="97600243"/>
<dbReference type="KEGG" id="sfx:S4705"/>
<dbReference type="PATRIC" id="fig|623.157.peg.4687"/>
<dbReference type="HOGENOM" id="CLU_3184814_0_0_6"/>
<dbReference type="Proteomes" id="UP000001006">
    <property type="component" value="Chromosome"/>
</dbReference>
<dbReference type="Proteomes" id="UP000002673">
    <property type="component" value="Chromosome"/>
</dbReference>
<gene>
    <name type="primary">yjjY</name>
    <name type="ordered locus">SF4433.1</name>
    <name type="ordered locus">S4705</name>
</gene>
<protein>
    <recommendedName>
        <fullName>Uncharacterized protein YjjY</fullName>
    </recommendedName>
</protein>
<feature type="chain" id="PRO_0000169819" description="Uncharacterized protein YjjY">
    <location>
        <begin position="1"/>
        <end position="46"/>
    </location>
</feature>
<name>YJJY_SHIFL</name>
<organism>
    <name type="scientific">Shigella flexneri</name>
    <dbReference type="NCBI Taxonomy" id="623"/>
    <lineage>
        <taxon>Bacteria</taxon>
        <taxon>Pseudomonadati</taxon>
        <taxon>Pseudomonadota</taxon>
        <taxon>Gammaproteobacteria</taxon>
        <taxon>Enterobacterales</taxon>
        <taxon>Enterobacteriaceae</taxon>
        <taxon>Shigella</taxon>
    </lineage>
</organism>
<sequence length="46" mass="4886">MTKVRNCVLDALSINVNNIISLVVGTFPQDPTVSKTAVILTILTAT</sequence>
<proteinExistence type="predicted"/>
<keyword id="KW-1185">Reference proteome</keyword>
<reference key="1">
    <citation type="journal article" date="2002" name="Nucleic Acids Res.">
        <title>Genome sequence of Shigella flexneri 2a: insights into pathogenicity through comparison with genomes of Escherichia coli K12 and O157.</title>
        <authorList>
            <person name="Jin Q."/>
            <person name="Yuan Z."/>
            <person name="Xu J."/>
            <person name="Wang Y."/>
            <person name="Shen Y."/>
            <person name="Lu W."/>
            <person name="Wang J."/>
            <person name="Liu H."/>
            <person name="Yang J."/>
            <person name="Yang F."/>
            <person name="Zhang X."/>
            <person name="Zhang J."/>
            <person name="Yang G."/>
            <person name="Wu H."/>
            <person name="Qu D."/>
            <person name="Dong J."/>
            <person name="Sun L."/>
            <person name="Xue Y."/>
            <person name="Zhao A."/>
            <person name="Gao Y."/>
            <person name="Zhu J."/>
            <person name="Kan B."/>
            <person name="Ding K."/>
            <person name="Chen S."/>
            <person name="Cheng H."/>
            <person name="Yao Z."/>
            <person name="He B."/>
            <person name="Chen R."/>
            <person name="Ma D."/>
            <person name="Qiang B."/>
            <person name="Wen Y."/>
            <person name="Hou Y."/>
            <person name="Yu J."/>
        </authorList>
    </citation>
    <scope>NUCLEOTIDE SEQUENCE [LARGE SCALE GENOMIC DNA]</scope>
    <source>
        <strain>301 / Serotype 2a</strain>
    </source>
</reference>
<reference key="2">
    <citation type="journal article" date="2003" name="Infect. Immun.">
        <title>Complete genome sequence and comparative genomics of Shigella flexneri serotype 2a strain 2457T.</title>
        <authorList>
            <person name="Wei J."/>
            <person name="Goldberg M.B."/>
            <person name="Burland V."/>
            <person name="Venkatesan M.M."/>
            <person name="Deng W."/>
            <person name="Fournier G."/>
            <person name="Mayhew G.F."/>
            <person name="Plunkett G. III"/>
            <person name="Rose D.J."/>
            <person name="Darling A."/>
            <person name="Mau B."/>
            <person name="Perna N.T."/>
            <person name="Payne S.M."/>
            <person name="Runyen-Janecky L.J."/>
            <person name="Zhou S."/>
            <person name="Schwartz D.C."/>
            <person name="Blattner F.R."/>
        </authorList>
    </citation>
    <scope>NUCLEOTIDE SEQUENCE [LARGE SCALE GENOMIC DNA]</scope>
    <source>
        <strain>ATCC 700930 / 2457T / Serotype 2a</strain>
    </source>
</reference>